<accession>A7GRK0</accession>
<sequence length="70" mass="7806">MLNPSIDSLLKKIDSKYTLVTVAAKRAREMQLADDCAVEKPVSHKFVGKALEEIDAELLNYVPSEEKVSE</sequence>
<keyword id="KW-0240">DNA-directed RNA polymerase</keyword>
<keyword id="KW-0548">Nucleotidyltransferase</keyword>
<keyword id="KW-0804">Transcription</keyword>
<keyword id="KW-0808">Transferase</keyword>
<feature type="chain" id="PRO_1000079614" description="DNA-directed RNA polymerase subunit omega">
    <location>
        <begin position="1"/>
        <end position="70"/>
    </location>
</feature>
<organism>
    <name type="scientific">Bacillus cytotoxicus (strain DSM 22905 / CIP 110041 / 391-98 / NVH 391-98)</name>
    <dbReference type="NCBI Taxonomy" id="315749"/>
    <lineage>
        <taxon>Bacteria</taxon>
        <taxon>Bacillati</taxon>
        <taxon>Bacillota</taxon>
        <taxon>Bacilli</taxon>
        <taxon>Bacillales</taxon>
        <taxon>Bacillaceae</taxon>
        <taxon>Bacillus</taxon>
        <taxon>Bacillus cereus group</taxon>
    </lineage>
</organism>
<name>RPOZ_BACCN</name>
<dbReference type="EC" id="2.7.7.6" evidence="1"/>
<dbReference type="EMBL" id="CP000764">
    <property type="protein sequence ID" value="ABS22758.1"/>
    <property type="molecule type" value="Genomic_DNA"/>
</dbReference>
<dbReference type="RefSeq" id="WP_012094966.1">
    <property type="nucleotide sequence ID" value="NC_009674.1"/>
</dbReference>
<dbReference type="SMR" id="A7GRK0"/>
<dbReference type="STRING" id="315749.Bcer98_2522"/>
<dbReference type="GeneID" id="33897778"/>
<dbReference type="KEGG" id="bcy:Bcer98_2522"/>
<dbReference type="eggNOG" id="COG1758">
    <property type="taxonomic scope" value="Bacteria"/>
</dbReference>
<dbReference type="HOGENOM" id="CLU_125406_6_0_9"/>
<dbReference type="OrthoDB" id="9815459at2"/>
<dbReference type="Proteomes" id="UP000002300">
    <property type="component" value="Chromosome"/>
</dbReference>
<dbReference type="GO" id="GO:0000428">
    <property type="term" value="C:DNA-directed RNA polymerase complex"/>
    <property type="evidence" value="ECO:0007669"/>
    <property type="project" value="UniProtKB-KW"/>
</dbReference>
<dbReference type="GO" id="GO:0003677">
    <property type="term" value="F:DNA binding"/>
    <property type="evidence" value="ECO:0007669"/>
    <property type="project" value="UniProtKB-UniRule"/>
</dbReference>
<dbReference type="GO" id="GO:0003899">
    <property type="term" value="F:DNA-directed RNA polymerase activity"/>
    <property type="evidence" value="ECO:0007669"/>
    <property type="project" value="UniProtKB-UniRule"/>
</dbReference>
<dbReference type="GO" id="GO:0006351">
    <property type="term" value="P:DNA-templated transcription"/>
    <property type="evidence" value="ECO:0007669"/>
    <property type="project" value="UniProtKB-UniRule"/>
</dbReference>
<dbReference type="Gene3D" id="3.90.940.10">
    <property type="match status" value="1"/>
</dbReference>
<dbReference type="HAMAP" id="MF_00366">
    <property type="entry name" value="RNApol_bact_RpoZ"/>
    <property type="match status" value="1"/>
</dbReference>
<dbReference type="InterPro" id="IPR003716">
    <property type="entry name" value="DNA-dir_RNA_pol_omega"/>
</dbReference>
<dbReference type="InterPro" id="IPR006110">
    <property type="entry name" value="Pol_omega/Rpo6/RPB6"/>
</dbReference>
<dbReference type="InterPro" id="IPR036161">
    <property type="entry name" value="RPB6/omega-like_sf"/>
</dbReference>
<dbReference type="NCBIfam" id="TIGR00690">
    <property type="entry name" value="rpoZ"/>
    <property type="match status" value="1"/>
</dbReference>
<dbReference type="PANTHER" id="PTHR34476">
    <property type="entry name" value="DNA-DIRECTED RNA POLYMERASE SUBUNIT OMEGA"/>
    <property type="match status" value="1"/>
</dbReference>
<dbReference type="PANTHER" id="PTHR34476:SF1">
    <property type="entry name" value="DNA-DIRECTED RNA POLYMERASE SUBUNIT OMEGA"/>
    <property type="match status" value="1"/>
</dbReference>
<dbReference type="Pfam" id="PF01192">
    <property type="entry name" value="RNA_pol_Rpb6"/>
    <property type="match status" value="1"/>
</dbReference>
<dbReference type="SMART" id="SM01409">
    <property type="entry name" value="RNA_pol_Rpb6"/>
    <property type="match status" value="1"/>
</dbReference>
<dbReference type="SUPFAM" id="SSF63562">
    <property type="entry name" value="RPB6/omega subunit-like"/>
    <property type="match status" value="1"/>
</dbReference>
<comment type="function">
    <text evidence="1">Promotes RNA polymerase assembly. Latches the N- and C-terminal regions of the beta' subunit thereby facilitating its interaction with the beta and alpha subunits.</text>
</comment>
<comment type="catalytic activity">
    <reaction evidence="1">
        <text>RNA(n) + a ribonucleoside 5'-triphosphate = RNA(n+1) + diphosphate</text>
        <dbReference type="Rhea" id="RHEA:21248"/>
        <dbReference type="Rhea" id="RHEA-COMP:14527"/>
        <dbReference type="Rhea" id="RHEA-COMP:17342"/>
        <dbReference type="ChEBI" id="CHEBI:33019"/>
        <dbReference type="ChEBI" id="CHEBI:61557"/>
        <dbReference type="ChEBI" id="CHEBI:140395"/>
        <dbReference type="EC" id="2.7.7.6"/>
    </reaction>
</comment>
<comment type="subunit">
    <text evidence="1">The RNAP catalytic core consists of 2 alpha, 1 beta, 1 beta' and 1 omega subunit. When a sigma factor is associated with the core the holoenzyme is formed, which can initiate transcription.</text>
</comment>
<comment type="similarity">
    <text evidence="1">Belongs to the RNA polymerase subunit omega family.</text>
</comment>
<reference key="1">
    <citation type="journal article" date="2008" name="Chem. Biol. Interact.">
        <title>Extending the Bacillus cereus group genomics to putative food-borne pathogens of different toxicity.</title>
        <authorList>
            <person name="Lapidus A."/>
            <person name="Goltsman E."/>
            <person name="Auger S."/>
            <person name="Galleron N."/>
            <person name="Segurens B."/>
            <person name="Dossat C."/>
            <person name="Land M.L."/>
            <person name="Broussolle V."/>
            <person name="Brillard J."/>
            <person name="Guinebretiere M.-H."/>
            <person name="Sanchis V."/>
            <person name="Nguen-the C."/>
            <person name="Lereclus D."/>
            <person name="Richardson P."/>
            <person name="Wincker P."/>
            <person name="Weissenbach J."/>
            <person name="Ehrlich S.D."/>
            <person name="Sorokin A."/>
        </authorList>
    </citation>
    <scope>NUCLEOTIDE SEQUENCE [LARGE SCALE GENOMIC DNA]</scope>
    <source>
        <strain>DSM 22905 / CIP 110041 / 391-98 / NVH 391-98</strain>
    </source>
</reference>
<protein>
    <recommendedName>
        <fullName evidence="1">DNA-directed RNA polymerase subunit omega</fullName>
        <shortName evidence="1">RNAP omega subunit</shortName>
        <ecNumber evidence="1">2.7.7.6</ecNumber>
    </recommendedName>
    <alternativeName>
        <fullName evidence="1">RNA polymerase omega subunit</fullName>
    </alternativeName>
    <alternativeName>
        <fullName evidence="1">Transcriptase subunit omega</fullName>
    </alternativeName>
</protein>
<evidence type="ECO:0000255" key="1">
    <source>
        <dbReference type="HAMAP-Rule" id="MF_00366"/>
    </source>
</evidence>
<proteinExistence type="inferred from homology"/>
<gene>
    <name evidence="1" type="primary">rpoZ</name>
    <name type="ordered locus">Bcer98_2522</name>
</gene>